<gene>
    <name type="ORF">CBG23501</name>
</gene>
<evidence type="ECO:0000256" key="1">
    <source>
        <dbReference type="SAM" id="MobiDB-lite"/>
    </source>
</evidence>
<evidence type="ECO:0000305" key="2"/>
<sequence>MSMKFLTGLQDLLGLYETGTAASSPASPIPPTSPSMFATPPHQQSHSSATSVRKKVCQEANSSADDPDSDARIRQCSHTRTVSFPADIGLITGYHDAPSALFHSIENSNRSIDPTEILKYYREACQRRQCAPSVGVEKQIGYFHKSPDTRQELLSLKGERVSHAQMEALEEIFKRVQFNTIDFEYTFLDDDCAISLGEMIEFYDSCVRLNLSFNKQIDVRGWAAMFKSIRNAISLQMLNLRYTNLNDRSIPSLCKLARAQPSASLTCIHLENTQMSGKNLLVLICALKYNTGIRELYLGDNGLQPTDGSHIYQLISSNTCLQLLDLRNNNIGDSGVRHICEGLRNRESIEKSALSAMVLWNNNVTGASMDSLAEALMENTKIETLNIGSNNLGVEGVARLKPALVSNSHLHRLGLQNTGINCEGAIILAECIADNTALLRVDIRDNPIALAGLLALHSAMKMNTSITLLNIDATCVRMSSEKVREYQDEFERYFREIQTYCDRNKDDVLKKLTVTFEDQDHVSEDTEKENKDADNDDKEPENEDGDTTPETSDSDASADQSDSPADKEKSEKSKKENNNNEKRPLMASASTSKVCQKERHQRFVRSSSLTCAETVHDIHDRLREMSGSTHSLDAAMSAATTLSPTMLTATYGSTPGPLDASSNTDSMKTIKKTFTVTSAAPPTLALAEWGSLPALPQASPTSTPVVRKLRRFSVSPSSSVFDVATTSSASTSPIPEVTASPHPIRPSTLAIGIPVTGSVPAGPSSAPMIFVDHHTEAASPDCTNTCEEPTTSREAERKRAEETIRQRRGQKEIKDTCRAVINDLLNYVEYEEKSQVERKASLLLRNAFSRPNPEELLKNLQRAESPLTPRTPVTPSRVLEIAEELEEETDEQVCQSVVRCLVRDVLQTEKNELRSTLDRRRRHNSVRNSPV</sequence>
<dbReference type="EMBL" id="HE601533">
    <property type="protein sequence ID" value="CAP39538.1"/>
    <property type="molecule type" value="Genomic_DNA"/>
</dbReference>
<dbReference type="RefSeq" id="XP_002636770.1">
    <property type="nucleotide sequence ID" value="XM_002636724.1"/>
</dbReference>
<dbReference type="SMR" id="A8Y3R9"/>
<dbReference type="FunCoup" id="A8Y3R9">
    <property type="interactions" value="161"/>
</dbReference>
<dbReference type="EnsemblMetazoa" id="CBG23501b.1">
    <property type="protein sequence ID" value="CBG23501b.1"/>
    <property type="gene ID" value="WBGene00041849"/>
</dbReference>
<dbReference type="GeneID" id="8578765"/>
<dbReference type="KEGG" id="cbr:CBG_23501"/>
<dbReference type="CTD" id="8578765"/>
<dbReference type="WormBase" id="CBG23501a">
    <property type="protein sequence ID" value="CBP39523"/>
    <property type="gene ID" value="WBGene00041849"/>
</dbReference>
<dbReference type="eggNOG" id="KOG1908">
    <property type="taxonomic scope" value="Eukaryota"/>
</dbReference>
<dbReference type="HOGENOM" id="CLU_311279_0_0_1"/>
<dbReference type="InParanoid" id="A8Y3R9"/>
<dbReference type="OMA" id="IEFYDSC"/>
<dbReference type="Proteomes" id="UP000008549">
    <property type="component" value="Unassembled WGS sequence"/>
</dbReference>
<dbReference type="CDD" id="cd00116">
    <property type="entry name" value="LRR_RI"/>
    <property type="match status" value="1"/>
</dbReference>
<dbReference type="Gene3D" id="3.80.10.10">
    <property type="entry name" value="Ribonuclease Inhibitor"/>
    <property type="match status" value="1"/>
</dbReference>
<dbReference type="InterPro" id="IPR001611">
    <property type="entry name" value="Leu-rich_rpt"/>
</dbReference>
<dbReference type="InterPro" id="IPR032675">
    <property type="entry name" value="LRR_dom_sf"/>
</dbReference>
<dbReference type="InterPro" id="IPR051279">
    <property type="entry name" value="PP1-Reg/Actin-Interact_Protein"/>
</dbReference>
<dbReference type="PANTHER" id="PTHR24112">
    <property type="entry name" value="LEUCINE-RICH REPEAT, ISOFORM F-RELATED"/>
    <property type="match status" value="1"/>
</dbReference>
<dbReference type="PANTHER" id="PTHR24112:SF9">
    <property type="entry name" value="PROTEIN PHOSPHATASE 1 REGULATORY SUBUNIT 37"/>
    <property type="match status" value="1"/>
</dbReference>
<dbReference type="Pfam" id="PF13516">
    <property type="entry name" value="LRR_6"/>
    <property type="match status" value="2"/>
</dbReference>
<dbReference type="SMART" id="SM00368">
    <property type="entry name" value="LRR_RI"/>
    <property type="match status" value="7"/>
</dbReference>
<dbReference type="SUPFAM" id="SSF52047">
    <property type="entry name" value="RNI-like"/>
    <property type="match status" value="1"/>
</dbReference>
<comment type="similarity">
    <text evidence="2">Belongs to the PPP1R37 family.</text>
</comment>
<protein>
    <recommendedName>
        <fullName>Protein phosphatase 1 regulatory subunit 37 homolog</fullName>
    </recommendedName>
</protein>
<keyword id="KW-0433">Leucine-rich repeat</keyword>
<keyword id="KW-1185">Reference proteome</keyword>
<keyword id="KW-0677">Repeat</keyword>
<proteinExistence type="inferred from homology"/>
<accession>A8Y3R9</accession>
<reference key="1">
    <citation type="journal article" date="2003" name="PLoS Biol.">
        <title>The genome sequence of Caenorhabditis briggsae: a platform for comparative genomics.</title>
        <authorList>
            <person name="Stein L.D."/>
            <person name="Bao Z."/>
            <person name="Blasiar D."/>
            <person name="Blumenthal T."/>
            <person name="Brent M.R."/>
            <person name="Chen N."/>
            <person name="Chinwalla A."/>
            <person name="Clarke L."/>
            <person name="Clee C."/>
            <person name="Coghlan A."/>
            <person name="Coulson A."/>
            <person name="D'Eustachio P."/>
            <person name="Fitch D.H.A."/>
            <person name="Fulton L.A."/>
            <person name="Fulton R.E."/>
            <person name="Griffiths-Jones S."/>
            <person name="Harris T.W."/>
            <person name="Hillier L.W."/>
            <person name="Kamath R."/>
            <person name="Kuwabara P.E."/>
            <person name="Mardis E.R."/>
            <person name="Marra M.A."/>
            <person name="Miner T.L."/>
            <person name="Minx P."/>
            <person name="Mullikin J.C."/>
            <person name="Plumb R.W."/>
            <person name="Rogers J."/>
            <person name="Schein J.E."/>
            <person name="Sohrmann M."/>
            <person name="Spieth J."/>
            <person name="Stajich J.E."/>
            <person name="Wei C."/>
            <person name="Willey D."/>
            <person name="Wilson R.K."/>
            <person name="Durbin R.M."/>
            <person name="Waterston R.H."/>
        </authorList>
    </citation>
    <scope>NUCLEOTIDE SEQUENCE [LARGE SCALE GENOMIC DNA]</scope>
    <source>
        <strain>AF16</strain>
    </source>
</reference>
<organism>
    <name type="scientific">Caenorhabditis briggsae</name>
    <dbReference type="NCBI Taxonomy" id="6238"/>
    <lineage>
        <taxon>Eukaryota</taxon>
        <taxon>Metazoa</taxon>
        <taxon>Ecdysozoa</taxon>
        <taxon>Nematoda</taxon>
        <taxon>Chromadorea</taxon>
        <taxon>Rhabditida</taxon>
        <taxon>Rhabditina</taxon>
        <taxon>Rhabditomorpha</taxon>
        <taxon>Rhabditoidea</taxon>
        <taxon>Rhabditidae</taxon>
        <taxon>Peloderinae</taxon>
        <taxon>Caenorhabditis</taxon>
    </lineage>
</organism>
<name>PPR37_CAEBR</name>
<feature type="chain" id="PRO_0000320942" description="Protein phosphatase 1 regulatory subunit 37 homolog">
    <location>
        <begin position="1"/>
        <end position="931"/>
    </location>
</feature>
<feature type="repeat" description="LRR 1">
    <location>
        <begin position="232"/>
        <end position="259"/>
    </location>
</feature>
<feature type="repeat" description="LRR 2">
    <location>
        <begin position="262"/>
        <end position="285"/>
    </location>
</feature>
<feature type="repeat" description="LRR 3">
    <location>
        <begin position="290"/>
        <end position="314"/>
    </location>
</feature>
<feature type="repeat" description="LRR 4">
    <location>
        <begin position="323"/>
        <end position="346"/>
    </location>
</feature>
<feature type="repeat" description="LRR 5">
    <location>
        <begin position="351"/>
        <end position="374"/>
    </location>
</feature>
<feature type="repeat" description="LRR 6">
    <location>
        <begin position="379"/>
        <end position="407"/>
    </location>
</feature>
<feature type="repeat" description="LRR 7">
    <location>
        <begin position="409"/>
        <end position="430"/>
    </location>
</feature>
<feature type="repeat" description="LRR 8">
    <location>
        <begin position="435"/>
        <end position="458"/>
    </location>
</feature>
<feature type="region of interest" description="Disordered" evidence="1">
    <location>
        <begin position="20"/>
        <end position="71"/>
    </location>
</feature>
<feature type="region of interest" description="Disordered" evidence="1">
    <location>
        <begin position="519"/>
        <end position="602"/>
    </location>
</feature>
<feature type="region of interest" description="Disordered" evidence="1">
    <location>
        <begin position="780"/>
        <end position="807"/>
    </location>
</feature>
<feature type="compositionally biased region" description="Polar residues" evidence="1">
    <location>
        <begin position="41"/>
        <end position="51"/>
    </location>
</feature>
<feature type="compositionally biased region" description="Basic and acidic residues" evidence="1">
    <location>
        <begin position="519"/>
        <end position="533"/>
    </location>
</feature>
<feature type="compositionally biased region" description="Acidic residues" evidence="1">
    <location>
        <begin position="534"/>
        <end position="547"/>
    </location>
</feature>
<feature type="compositionally biased region" description="Low complexity" evidence="1">
    <location>
        <begin position="554"/>
        <end position="563"/>
    </location>
</feature>
<feature type="compositionally biased region" description="Basic and acidic residues" evidence="1">
    <location>
        <begin position="564"/>
        <end position="584"/>
    </location>
</feature>
<feature type="compositionally biased region" description="Basic and acidic residues" evidence="1">
    <location>
        <begin position="790"/>
        <end position="807"/>
    </location>
</feature>